<feature type="chain" id="PRO_0000205239" description="Isopentenyl-diphosphate Delta-isomerase">
    <location>
        <begin position="1"/>
        <end position="209"/>
    </location>
</feature>
<feature type="domain" description="Nudix hydrolase">
    <location>
        <begin position="36"/>
        <end position="171"/>
    </location>
</feature>
<feature type="active site" evidence="1">
    <location>
        <position position="73"/>
    </location>
</feature>
<feature type="active site" evidence="1">
    <location>
        <position position="122"/>
    </location>
</feature>
<feature type="binding site" evidence="1">
    <location>
        <position position="31"/>
    </location>
    <ligand>
        <name>Mn(2+)</name>
        <dbReference type="ChEBI" id="CHEBI:29035"/>
    </ligand>
</feature>
<feature type="binding site" evidence="1">
    <location>
        <position position="38"/>
    </location>
    <ligand>
        <name>Mn(2+)</name>
        <dbReference type="ChEBI" id="CHEBI:29035"/>
    </ligand>
</feature>
<feature type="binding site" evidence="1">
    <location>
        <position position="73"/>
    </location>
    <ligand>
        <name>Mg(2+)</name>
        <dbReference type="ChEBI" id="CHEBI:18420"/>
    </ligand>
</feature>
<feature type="binding site" evidence="1">
    <location>
        <position position="75"/>
    </location>
    <ligand>
        <name>Mn(2+)</name>
        <dbReference type="ChEBI" id="CHEBI:29035"/>
    </ligand>
</feature>
<feature type="binding site" evidence="1">
    <location>
        <position position="93"/>
    </location>
    <ligand>
        <name>Mg(2+)</name>
        <dbReference type="ChEBI" id="CHEBI:18420"/>
    </ligand>
</feature>
<feature type="binding site" evidence="1">
    <location>
        <position position="120"/>
    </location>
    <ligand>
        <name>Mn(2+)</name>
        <dbReference type="ChEBI" id="CHEBI:29035"/>
    </ligand>
</feature>
<feature type="binding site" evidence="1">
    <location>
        <position position="122"/>
    </location>
    <ligand>
        <name>Mn(2+)</name>
        <dbReference type="ChEBI" id="CHEBI:29035"/>
    </ligand>
</feature>
<proteinExistence type="inferred from homology"/>
<dbReference type="EC" id="5.3.3.2" evidence="1"/>
<dbReference type="EMBL" id="AB039932">
    <property type="protein sequence ID" value="BAA97764.1"/>
    <property type="molecule type" value="Genomic_DNA"/>
</dbReference>
<dbReference type="EMBL" id="AP002086">
    <property type="protein sequence ID" value="BAB16172.1"/>
    <property type="molecule type" value="Genomic_DNA"/>
</dbReference>
<dbReference type="RefSeq" id="NP_066634.1">
    <property type="nucleotide sequence ID" value="NC_002575.1"/>
</dbReference>
<dbReference type="RefSeq" id="WP_010900243.1">
    <property type="nucleotide sequence ID" value="NZ_KY000038.1"/>
</dbReference>
<dbReference type="SMR" id="Q9KWD1"/>
<dbReference type="UniPathway" id="UPA00059">
    <property type="reaction ID" value="UER00104"/>
</dbReference>
<dbReference type="GO" id="GO:0005737">
    <property type="term" value="C:cytoplasm"/>
    <property type="evidence" value="ECO:0007669"/>
    <property type="project" value="UniProtKB-SubCell"/>
</dbReference>
<dbReference type="GO" id="GO:0004452">
    <property type="term" value="F:isopentenyl-diphosphate delta-isomerase activity"/>
    <property type="evidence" value="ECO:0007669"/>
    <property type="project" value="UniProtKB-UniRule"/>
</dbReference>
<dbReference type="GO" id="GO:0046872">
    <property type="term" value="F:metal ion binding"/>
    <property type="evidence" value="ECO:0007669"/>
    <property type="project" value="UniProtKB-KW"/>
</dbReference>
<dbReference type="GO" id="GO:0050992">
    <property type="term" value="P:dimethylallyl diphosphate biosynthetic process"/>
    <property type="evidence" value="ECO:0007669"/>
    <property type="project" value="UniProtKB-UniRule"/>
</dbReference>
<dbReference type="GO" id="GO:0008299">
    <property type="term" value="P:isoprenoid biosynthetic process"/>
    <property type="evidence" value="ECO:0007669"/>
    <property type="project" value="UniProtKB-KW"/>
</dbReference>
<dbReference type="CDD" id="cd02885">
    <property type="entry name" value="NUDIX_IPP_Isomerase"/>
    <property type="match status" value="1"/>
</dbReference>
<dbReference type="Gene3D" id="3.90.79.10">
    <property type="entry name" value="Nucleoside Triphosphate Pyrophosphohydrolase"/>
    <property type="match status" value="1"/>
</dbReference>
<dbReference type="HAMAP" id="MF_00202">
    <property type="entry name" value="Idi"/>
    <property type="match status" value="1"/>
</dbReference>
<dbReference type="InterPro" id="IPR056375">
    <property type="entry name" value="Idi_bact"/>
</dbReference>
<dbReference type="InterPro" id="IPR011876">
    <property type="entry name" value="IsopentenylPP_isomerase_typ1"/>
</dbReference>
<dbReference type="InterPro" id="IPR015797">
    <property type="entry name" value="NUDIX_hydrolase-like_dom_sf"/>
</dbReference>
<dbReference type="InterPro" id="IPR000086">
    <property type="entry name" value="NUDIX_hydrolase_dom"/>
</dbReference>
<dbReference type="NCBIfam" id="TIGR02150">
    <property type="entry name" value="IPP_isom_1"/>
    <property type="match status" value="1"/>
</dbReference>
<dbReference type="NCBIfam" id="NF002995">
    <property type="entry name" value="PRK03759.1"/>
    <property type="match status" value="1"/>
</dbReference>
<dbReference type="PANTHER" id="PTHR10885">
    <property type="entry name" value="ISOPENTENYL-DIPHOSPHATE DELTA-ISOMERASE"/>
    <property type="match status" value="1"/>
</dbReference>
<dbReference type="PANTHER" id="PTHR10885:SF0">
    <property type="entry name" value="ISOPENTENYL-DIPHOSPHATE DELTA-ISOMERASE"/>
    <property type="match status" value="1"/>
</dbReference>
<dbReference type="Pfam" id="PF00293">
    <property type="entry name" value="NUDIX"/>
    <property type="match status" value="1"/>
</dbReference>
<dbReference type="PIRSF" id="PIRSF018427">
    <property type="entry name" value="Isopntndiph_ism"/>
    <property type="match status" value="1"/>
</dbReference>
<dbReference type="SUPFAM" id="SSF55811">
    <property type="entry name" value="Nudix"/>
    <property type="match status" value="1"/>
</dbReference>
<dbReference type="PROSITE" id="PS51462">
    <property type="entry name" value="NUDIX"/>
    <property type="match status" value="1"/>
</dbReference>
<gene>
    <name evidence="1" type="primary">idi</name>
    <name type="ORF">riorf53</name>
</gene>
<name>IDI_RHIRH</name>
<protein>
    <recommendedName>
        <fullName evidence="1">Isopentenyl-diphosphate Delta-isomerase</fullName>
        <shortName evidence="1">IPP isomerase</shortName>
        <ecNumber evidence="1">5.3.3.2</ecNumber>
    </recommendedName>
    <alternativeName>
        <fullName evidence="1">IPP:DMAPP isomerase</fullName>
    </alternativeName>
    <alternativeName>
        <fullName evidence="1">Isopentenyl pyrophosphate isomerase</fullName>
    </alternativeName>
</protein>
<accession>Q9KWD1</accession>
<keyword id="KW-0963">Cytoplasm</keyword>
<keyword id="KW-0413">Isomerase</keyword>
<keyword id="KW-0414">Isoprene biosynthesis</keyword>
<keyword id="KW-0460">Magnesium</keyword>
<keyword id="KW-0464">Manganese</keyword>
<keyword id="KW-0479">Metal-binding</keyword>
<keyword id="KW-0614">Plasmid</keyword>
<evidence type="ECO:0000255" key="1">
    <source>
        <dbReference type="HAMAP-Rule" id="MF_00202"/>
    </source>
</evidence>
<organism>
    <name type="scientific">Rhizobium rhizogenes</name>
    <name type="common">Agrobacterium rhizogenes</name>
    <dbReference type="NCBI Taxonomy" id="359"/>
    <lineage>
        <taxon>Bacteria</taxon>
        <taxon>Pseudomonadati</taxon>
        <taxon>Pseudomonadota</taxon>
        <taxon>Alphaproteobacteria</taxon>
        <taxon>Hyphomicrobiales</taxon>
        <taxon>Rhizobiaceae</taxon>
        <taxon>Rhizobium/Agrobacterium group</taxon>
        <taxon>Rhizobium</taxon>
    </lineage>
</organism>
<geneLocation type="plasmid">
    <name>pRi1724</name>
</geneLocation>
<sequence length="209" mass="23460">MTLPANQSPEMVILCNELGEATGTAPKSEIHHSDTPLHLAFSVYIFNGDNKLLVTRRASDKITWPGVLSNSCCGHPQPGEPLTEAIERRVHEELRIRADDIRLVLPEFSYRASMTNGITENELCPVFAAHCKTSGVNPDLNEVSAWEWVHWQWFFESVQAERLLVSPWCRAQVDLLAPLGANPSQWPVAEERRLPKAARTKIDVQLKVS</sequence>
<reference key="1">
    <citation type="journal article" date="2000" name="DNA Res.">
        <title>Analysis of unique variable region of a plant root inducing plasmid, pRi1724, by the construction of its physical map and library.</title>
        <authorList>
            <person name="Moriguchi K."/>
            <person name="Maeda Y."/>
            <person name="Satou M."/>
            <person name="Kataoka M."/>
            <person name="Tanaka N."/>
            <person name="Yoshida K."/>
        </authorList>
    </citation>
    <scope>NUCLEOTIDE SEQUENCE [GENOMIC DNA]</scope>
    <source>
        <strain>MAFF03-01724</strain>
    </source>
</reference>
<reference key="2">
    <citation type="journal article" date="2001" name="J. Mol. Biol.">
        <title>The complete nucleotide sequence of a plant root-inducing (Ri) plasmid indicates its chimeric structure and evolutionary relationship between tumor-inducing (Ti) and symbiotic (Sym) plasmids in Rhizobiaceae.</title>
        <authorList>
            <person name="Moriguchi K."/>
            <person name="Maeda Y."/>
            <person name="Satou M."/>
            <person name="Hardayani N.S.N."/>
            <person name="Kataoka M."/>
            <person name="Tanaka N."/>
            <person name="Yoshida K."/>
        </authorList>
    </citation>
    <scope>NUCLEOTIDE SEQUENCE [GENOMIC DNA]</scope>
    <source>
        <strain>MAFF03-01724</strain>
    </source>
</reference>
<comment type="function">
    <text evidence="1">Catalyzes the 1,3-allylic rearrangement of the homoallylic substrate isopentenyl (IPP) to its highly electrophilic allylic isomer, dimethylallyl diphosphate (DMAPP).</text>
</comment>
<comment type="catalytic activity">
    <reaction evidence="1">
        <text>isopentenyl diphosphate = dimethylallyl diphosphate</text>
        <dbReference type="Rhea" id="RHEA:23284"/>
        <dbReference type="ChEBI" id="CHEBI:57623"/>
        <dbReference type="ChEBI" id="CHEBI:128769"/>
        <dbReference type="EC" id="5.3.3.2"/>
    </reaction>
</comment>
<comment type="cofactor">
    <cofactor evidence="1">
        <name>Mg(2+)</name>
        <dbReference type="ChEBI" id="CHEBI:18420"/>
    </cofactor>
    <text evidence="1">Binds 1 Mg(2+) ion per subunit. The magnesium ion binds only when substrate is bound.</text>
</comment>
<comment type="cofactor">
    <cofactor evidence="1">
        <name>Mn(2+)</name>
        <dbReference type="ChEBI" id="CHEBI:29035"/>
    </cofactor>
    <text evidence="1">Binds 1 Mn(2+) ion per subunit.</text>
</comment>
<comment type="pathway">
    <text evidence="1">Isoprenoid biosynthesis; dimethylallyl diphosphate biosynthesis; dimethylallyl diphosphate from isopentenyl diphosphate: step 1/1.</text>
</comment>
<comment type="subcellular location">
    <subcellularLocation>
        <location evidence="1">Cytoplasm</location>
    </subcellularLocation>
</comment>
<comment type="similarity">
    <text evidence="1">Belongs to the IPP isomerase type 1 family.</text>
</comment>